<dbReference type="EC" id="6.1.1.4" evidence="1"/>
<dbReference type="EMBL" id="CP000312">
    <property type="protein sequence ID" value="ABG86559.1"/>
    <property type="molecule type" value="Genomic_DNA"/>
</dbReference>
<dbReference type="RefSeq" id="WP_011591726.1">
    <property type="nucleotide sequence ID" value="NC_008262.1"/>
</dbReference>
<dbReference type="SMR" id="Q0SV78"/>
<dbReference type="KEGG" id="cpr:CPR_0645"/>
<dbReference type="Proteomes" id="UP000001824">
    <property type="component" value="Chromosome"/>
</dbReference>
<dbReference type="GO" id="GO:0005829">
    <property type="term" value="C:cytosol"/>
    <property type="evidence" value="ECO:0007669"/>
    <property type="project" value="TreeGrafter"/>
</dbReference>
<dbReference type="GO" id="GO:0002161">
    <property type="term" value="F:aminoacyl-tRNA deacylase activity"/>
    <property type="evidence" value="ECO:0007669"/>
    <property type="project" value="InterPro"/>
</dbReference>
<dbReference type="GO" id="GO:0005524">
    <property type="term" value="F:ATP binding"/>
    <property type="evidence" value="ECO:0007669"/>
    <property type="project" value="UniProtKB-UniRule"/>
</dbReference>
<dbReference type="GO" id="GO:0004823">
    <property type="term" value="F:leucine-tRNA ligase activity"/>
    <property type="evidence" value="ECO:0007669"/>
    <property type="project" value="UniProtKB-UniRule"/>
</dbReference>
<dbReference type="GO" id="GO:0006429">
    <property type="term" value="P:leucyl-tRNA aminoacylation"/>
    <property type="evidence" value="ECO:0007669"/>
    <property type="project" value="UniProtKB-UniRule"/>
</dbReference>
<dbReference type="CDD" id="cd07958">
    <property type="entry name" value="Anticodon_Ia_Leu_BEm"/>
    <property type="match status" value="1"/>
</dbReference>
<dbReference type="CDD" id="cd00812">
    <property type="entry name" value="LeuRS_core"/>
    <property type="match status" value="1"/>
</dbReference>
<dbReference type="FunFam" id="1.10.730.10:FF:000002">
    <property type="entry name" value="Leucine--tRNA ligase"/>
    <property type="match status" value="1"/>
</dbReference>
<dbReference type="FunFam" id="3.40.50.620:FF:000003">
    <property type="entry name" value="Leucine--tRNA ligase"/>
    <property type="match status" value="1"/>
</dbReference>
<dbReference type="FunFam" id="3.40.50.620:FF:000056">
    <property type="entry name" value="Leucine--tRNA ligase"/>
    <property type="match status" value="1"/>
</dbReference>
<dbReference type="Gene3D" id="3.10.20.590">
    <property type="match status" value="1"/>
</dbReference>
<dbReference type="Gene3D" id="3.40.50.620">
    <property type="entry name" value="HUPs"/>
    <property type="match status" value="2"/>
</dbReference>
<dbReference type="Gene3D" id="1.10.730.10">
    <property type="entry name" value="Isoleucyl-tRNA Synthetase, Domain 1"/>
    <property type="match status" value="1"/>
</dbReference>
<dbReference type="HAMAP" id="MF_00049_B">
    <property type="entry name" value="Leu_tRNA_synth_B"/>
    <property type="match status" value="1"/>
</dbReference>
<dbReference type="InterPro" id="IPR002300">
    <property type="entry name" value="aa-tRNA-synth_Ia"/>
</dbReference>
<dbReference type="InterPro" id="IPR002302">
    <property type="entry name" value="Leu-tRNA-ligase"/>
</dbReference>
<dbReference type="InterPro" id="IPR025709">
    <property type="entry name" value="Leu_tRNA-synth_edit"/>
</dbReference>
<dbReference type="InterPro" id="IPR013155">
    <property type="entry name" value="M/V/L/I-tRNA-synth_anticd-bd"/>
</dbReference>
<dbReference type="InterPro" id="IPR015413">
    <property type="entry name" value="Methionyl/Leucyl_tRNA_Synth"/>
</dbReference>
<dbReference type="InterPro" id="IPR014729">
    <property type="entry name" value="Rossmann-like_a/b/a_fold"/>
</dbReference>
<dbReference type="InterPro" id="IPR009080">
    <property type="entry name" value="tRNAsynth_Ia_anticodon-bd"/>
</dbReference>
<dbReference type="InterPro" id="IPR009008">
    <property type="entry name" value="Val/Leu/Ile-tRNA-synth_edit"/>
</dbReference>
<dbReference type="NCBIfam" id="TIGR00396">
    <property type="entry name" value="leuS_bact"/>
    <property type="match status" value="1"/>
</dbReference>
<dbReference type="PANTHER" id="PTHR43740:SF2">
    <property type="entry name" value="LEUCINE--TRNA LIGASE, MITOCHONDRIAL"/>
    <property type="match status" value="1"/>
</dbReference>
<dbReference type="PANTHER" id="PTHR43740">
    <property type="entry name" value="LEUCYL-TRNA SYNTHETASE"/>
    <property type="match status" value="1"/>
</dbReference>
<dbReference type="Pfam" id="PF08264">
    <property type="entry name" value="Anticodon_1"/>
    <property type="match status" value="1"/>
</dbReference>
<dbReference type="Pfam" id="PF00133">
    <property type="entry name" value="tRNA-synt_1"/>
    <property type="match status" value="1"/>
</dbReference>
<dbReference type="Pfam" id="PF13603">
    <property type="entry name" value="tRNA-synt_1_2"/>
    <property type="match status" value="1"/>
</dbReference>
<dbReference type="Pfam" id="PF09334">
    <property type="entry name" value="tRNA-synt_1g"/>
    <property type="match status" value="1"/>
</dbReference>
<dbReference type="PRINTS" id="PR00985">
    <property type="entry name" value="TRNASYNTHLEU"/>
</dbReference>
<dbReference type="SUPFAM" id="SSF47323">
    <property type="entry name" value="Anticodon-binding domain of a subclass of class I aminoacyl-tRNA synthetases"/>
    <property type="match status" value="1"/>
</dbReference>
<dbReference type="SUPFAM" id="SSF52374">
    <property type="entry name" value="Nucleotidylyl transferase"/>
    <property type="match status" value="1"/>
</dbReference>
<dbReference type="SUPFAM" id="SSF50677">
    <property type="entry name" value="ValRS/IleRS/LeuRS editing domain"/>
    <property type="match status" value="1"/>
</dbReference>
<feature type="chain" id="PRO_1000009330" description="Leucine--tRNA ligase">
    <location>
        <begin position="1"/>
        <end position="816"/>
    </location>
</feature>
<feature type="short sequence motif" description="'HIGH' region">
    <location>
        <begin position="40"/>
        <end position="51"/>
    </location>
</feature>
<feature type="short sequence motif" description="'KMSKS' region">
    <location>
        <begin position="576"/>
        <end position="580"/>
    </location>
</feature>
<feature type="binding site" evidence="1">
    <location>
        <position position="579"/>
    </location>
    <ligand>
        <name>ATP</name>
        <dbReference type="ChEBI" id="CHEBI:30616"/>
    </ligand>
</feature>
<proteinExistence type="inferred from homology"/>
<protein>
    <recommendedName>
        <fullName evidence="1">Leucine--tRNA ligase</fullName>
        <ecNumber evidence="1">6.1.1.4</ecNumber>
    </recommendedName>
    <alternativeName>
        <fullName evidence="1">Leucyl-tRNA synthetase</fullName>
        <shortName evidence="1">LeuRS</shortName>
    </alternativeName>
</protein>
<accession>Q0SV78</accession>
<evidence type="ECO:0000255" key="1">
    <source>
        <dbReference type="HAMAP-Rule" id="MF_00049"/>
    </source>
</evidence>
<gene>
    <name evidence="1" type="primary">leuS</name>
    <name type="ordered locus">CPR_0645</name>
</gene>
<organism>
    <name type="scientific">Clostridium perfringens (strain SM101 / Type A)</name>
    <dbReference type="NCBI Taxonomy" id="289380"/>
    <lineage>
        <taxon>Bacteria</taxon>
        <taxon>Bacillati</taxon>
        <taxon>Bacillota</taxon>
        <taxon>Clostridia</taxon>
        <taxon>Eubacteriales</taxon>
        <taxon>Clostridiaceae</taxon>
        <taxon>Clostridium</taxon>
    </lineage>
</organism>
<keyword id="KW-0030">Aminoacyl-tRNA synthetase</keyword>
<keyword id="KW-0067">ATP-binding</keyword>
<keyword id="KW-0963">Cytoplasm</keyword>
<keyword id="KW-0436">Ligase</keyword>
<keyword id="KW-0547">Nucleotide-binding</keyword>
<keyword id="KW-0648">Protein biosynthesis</keyword>
<reference key="1">
    <citation type="journal article" date="2006" name="Genome Res.">
        <title>Skewed genomic variability in strains of the toxigenic bacterial pathogen, Clostridium perfringens.</title>
        <authorList>
            <person name="Myers G.S.A."/>
            <person name="Rasko D.A."/>
            <person name="Cheung J.K."/>
            <person name="Ravel J."/>
            <person name="Seshadri R."/>
            <person name="DeBoy R.T."/>
            <person name="Ren Q."/>
            <person name="Varga J."/>
            <person name="Awad M.M."/>
            <person name="Brinkac L.M."/>
            <person name="Daugherty S.C."/>
            <person name="Haft D.H."/>
            <person name="Dodson R.J."/>
            <person name="Madupu R."/>
            <person name="Nelson W.C."/>
            <person name="Rosovitz M.J."/>
            <person name="Sullivan S.A."/>
            <person name="Khouri H."/>
            <person name="Dimitrov G.I."/>
            <person name="Watkins K.L."/>
            <person name="Mulligan S."/>
            <person name="Benton J."/>
            <person name="Radune D."/>
            <person name="Fisher D.J."/>
            <person name="Atkins H.S."/>
            <person name="Hiscox T."/>
            <person name="Jost B.H."/>
            <person name="Billington S.J."/>
            <person name="Songer J.G."/>
            <person name="McClane B.A."/>
            <person name="Titball R.W."/>
            <person name="Rood J.I."/>
            <person name="Melville S.B."/>
            <person name="Paulsen I.T."/>
        </authorList>
    </citation>
    <scope>NUCLEOTIDE SEQUENCE [LARGE SCALE GENOMIC DNA]</scope>
    <source>
        <strain>SM101 / Type A</strain>
    </source>
</reference>
<sequence>MGNYSTAIDKKWQDKWAESGLYKFDPNKEVEKLYVLEMFSYPSGSQLHAGHWFNYGPVDSWARFKRMQGYNVFQPMGFDAFGLPAENFAIKTGIHPQDSTIKNIAKMEEQLKAMGAMFNWENEVVTCSPEYYKWTQWLFLKLYEKGLAYRKKAPVNWCPSCQTVLANEQVVDGACERCSTEVTKKDLTQWFFKITDYADELLDKLDGLDWPEKTVSMQKHWIGRSTGSQVNFKVKDSDLNFDVFTTRVDTLCGVSYVVLAPENPLVDEIVSAEQKEAVENYKEEAKKQSDIERQSISREKTGVFTGAYAIHPLTGKEVPIWVGDYVLATYGTGAVMAVPAHDERDFAFAEKFNLPINRVIEAKDGSETNLPFCEHGILVNSGEFDGLTTDEAKEKIVEKLASMGLGEKKVNFRLRDWLVSRQRYWGAPIPVVYCEECGIVPVPESQLPVELPYDVEFAPDGKSPLAKSEAFVNTTCPHCGKPAKRETDTLDTFVCSSWYYLRYPDNKNTEAPFNPELINKMLPVDKYVGGPEHACMHLLYARFITKALRDMGYLNFDEPFTSLTHQGLILGPDGLKMSKSKGNTISPDDYIKEYGADVFRMYLMFGFAYTEGGAWSDDGIKSVNRFVERIERIIDTAREAISKGENNKTTMDKAEKELNYWRHNTIKSVTDDTDKLQFNTAIARMMEFINALSKYTQEKEMNLDFLKDVVSDYLRLLAPFAPHFSEEQWNLLGNSYSIFNEAWPKFDPKALVKDEVEIAIQVNGKIKNKIMVSSDLDEEGIKAAALADEKIIASTEGKTVVKVIVIKGRLVNIVVK</sequence>
<comment type="catalytic activity">
    <reaction evidence="1">
        <text>tRNA(Leu) + L-leucine + ATP = L-leucyl-tRNA(Leu) + AMP + diphosphate</text>
        <dbReference type="Rhea" id="RHEA:11688"/>
        <dbReference type="Rhea" id="RHEA-COMP:9613"/>
        <dbReference type="Rhea" id="RHEA-COMP:9622"/>
        <dbReference type="ChEBI" id="CHEBI:30616"/>
        <dbReference type="ChEBI" id="CHEBI:33019"/>
        <dbReference type="ChEBI" id="CHEBI:57427"/>
        <dbReference type="ChEBI" id="CHEBI:78442"/>
        <dbReference type="ChEBI" id="CHEBI:78494"/>
        <dbReference type="ChEBI" id="CHEBI:456215"/>
        <dbReference type="EC" id="6.1.1.4"/>
    </reaction>
</comment>
<comment type="subcellular location">
    <subcellularLocation>
        <location evidence="1">Cytoplasm</location>
    </subcellularLocation>
</comment>
<comment type="similarity">
    <text evidence="1">Belongs to the class-I aminoacyl-tRNA synthetase family.</text>
</comment>
<name>SYL_CLOPS</name>